<evidence type="ECO:0000255" key="1"/>
<evidence type="ECO:0000255" key="2">
    <source>
        <dbReference type="PROSITE-ProRule" id="PRU01014"/>
    </source>
</evidence>
<evidence type="ECO:0000256" key="3">
    <source>
        <dbReference type="SAM" id="MobiDB-lite"/>
    </source>
</evidence>
<dbReference type="EMBL" id="AL939121">
    <property type="protein sequence ID" value="CAA20416.1"/>
    <property type="molecule type" value="Genomic_DNA"/>
</dbReference>
<dbReference type="EMBL" id="X75206">
    <property type="protein sequence ID" value="CAA53017.1"/>
    <property type="molecule type" value="Genomic_DNA"/>
</dbReference>
<dbReference type="PIR" id="T35589">
    <property type="entry name" value="T35589"/>
</dbReference>
<dbReference type="RefSeq" id="NP_628918.1">
    <property type="nucleotide sequence ID" value="NC_003888.3"/>
</dbReference>
<dbReference type="RefSeq" id="WP_011029848.1">
    <property type="nucleotide sequence ID" value="NZ_VNID01000016.1"/>
</dbReference>
<dbReference type="SMR" id="P40179"/>
<dbReference type="STRING" id="100226.gene:17762409"/>
<dbReference type="PaxDb" id="100226-SCO4760"/>
<dbReference type="KEGG" id="sco:SCO4760"/>
<dbReference type="PATRIC" id="fig|100226.15.peg.4832"/>
<dbReference type="eggNOG" id="COG0726">
    <property type="taxonomic scope" value="Bacteria"/>
</dbReference>
<dbReference type="HOGENOM" id="CLU_021264_7_1_11"/>
<dbReference type="InParanoid" id="P40179"/>
<dbReference type="OrthoDB" id="3373088at2"/>
<dbReference type="PhylomeDB" id="P40179"/>
<dbReference type="Proteomes" id="UP000001973">
    <property type="component" value="Chromosome"/>
</dbReference>
<dbReference type="GO" id="GO:0016810">
    <property type="term" value="F:hydrolase activity, acting on carbon-nitrogen (but not peptide) bonds"/>
    <property type="evidence" value="ECO:0007669"/>
    <property type="project" value="InterPro"/>
</dbReference>
<dbReference type="GO" id="GO:0005975">
    <property type="term" value="P:carbohydrate metabolic process"/>
    <property type="evidence" value="ECO:0007669"/>
    <property type="project" value="InterPro"/>
</dbReference>
<dbReference type="CDD" id="cd10917">
    <property type="entry name" value="CE4_NodB_like_6s_7s"/>
    <property type="match status" value="1"/>
</dbReference>
<dbReference type="Gene3D" id="3.20.20.370">
    <property type="entry name" value="Glycoside hydrolase/deacetylase"/>
    <property type="match status" value="1"/>
</dbReference>
<dbReference type="InterPro" id="IPR011330">
    <property type="entry name" value="Glyco_hydro/deAcase_b/a-brl"/>
</dbReference>
<dbReference type="InterPro" id="IPR002509">
    <property type="entry name" value="NODB_dom"/>
</dbReference>
<dbReference type="InterPro" id="IPR050248">
    <property type="entry name" value="Polysacc_deacetylase_ArnD"/>
</dbReference>
<dbReference type="PANTHER" id="PTHR10587">
    <property type="entry name" value="GLYCOSYL TRANSFERASE-RELATED"/>
    <property type="match status" value="1"/>
</dbReference>
<dbReference type="PANTHER" id="PTHR10587:SF134">
    <property type="entry name" value="SECRETED PROTEIN"/>
    <property type="match status" value="1"/>
</dbReference>
<dbReference type="Pfam" id="PF01522">
    <property type="entry name" value="Polysacc_deac_1"/>
    <property type="match status" value="1"/>
</dbReference>
<dbReference type="SUPFAM" id="SSF88713">
    <property type="entry name" value="Glycoside hydrolase/deacetylase"/>
    <property type="match status" value="1"/>
</dbReference>
<dbReference type="PROSITE" id="PS51677">
    <property type="entry name" value="NODB"/>
    <property type="match status" value="1"/>
</dbReference>
<sequence length="249" mass="26977">MRRGRSRPAGAAPAALLLPLLLLLPLTGCDRLAAAPAEHAAAAGDPAQDADRGRRLPPVVDHVRTDDPVVFLTYDDGAERDPAFVGLIRERRLPVTLFLTDTVAGPAYGDLARLRPFGASLQNHTLDHRSLRGLPHAGQRAEICGQQTKLRSRFGVRAHLFRPPHGTYDTTTLRAAADCGITALVLWRATLDADGALTYTRGDHRLHPGDIVAVDPDHPTAANLAARTERLLETIEEQGLRVGNLENYL</sequence>
<proteinExistence type="inferred from homology"/>
<feature type="signal peptide" evidence="1">
    <location>
        <begin position="1"/>
        <end position="43"/>
    </location>
</feature>
<feature type="chain" id="PRO_0000014234" description="Uncharacterized protein SCO4760">
    <location>
        <begin position="44"/>
        <end position="249"/>
    </location>
</feature>
<feature type="domain" description="NodB homology" evidence="2">
    <location>
        <begin position="68"/>
        <end position="243"/>
    </location>
</feature>
<feature type="region of interest" description="Disordered" evidence="3">
    <location>
        <begin position="40"/>
        <end position="59"/>
    </location>
</feature>
<accession>P40179</accession>
<gene>
    <name type="ordered locus">SCO4760</name>
    <name type="ORF">SC6G4.38</name>
</gene>
<organism>
    <name type="scientific">Streptomyces coelicolor (strain ATCC BAA-471 / A3(2) / M145)</name>
    <dbReference type="NCBI Taxonomy" id="100226"/>
    <lineage>
        <taxon>Bacteria</taxon>
        <taxon>Bacillati</taxon>
        <taxon>Actinomycetota</taxon>
        <taxon>Actinomycetes</taxon>
        <taxon>Kitasatosporales</taxon>
        <taxon>Streptomycetaceae</taxon>
        <taxon>Streptomyces</taxon>
        <taxon>Streptomyces albidoflavus group</taxon>
    </lineage>
</organism>
<protein>
    <recommendedName>
        <fullName>Uncharacterized protein SCO4760</fullName>
    </recommendedName>
</protein>
<name>Y4760_STRCO</name>
<reference key="1">
    <citation type="journal article" date="2002" name="Nature">
        <title>Complete genome sequence of the model actinomycete Streptomyces coelicolor A3(2).</title>
        <authorList>
            <person name="Bentley S.D."/>
            <person name="Chater K.F."/>
            <person name="Cerdeno-Tarraga A.-M."/>
            <person name="Challis G.L."/>
            <person name="Thomson N.R."/>
            <person name="James K.D."/>
            <person name="Harris D.E."/>
            <person name="Quail M.A."/>
            <person name="Kieser H."/>
            <person name="Harper D."/>
            <person name="Bateman A."/>
            <person name="Brown S."/>
            <person name="Chandra G."/>
            <person name="Chen C.W."/>
            <person name="Collins M."/>
            <person name="Cronin A."/>
            <person name="Fraser A."/>
            <person name="Goble A."/>
            <person name="Hidalgo J."/>
            <person name="Hornsby T."/>
            <person name="Howarth S."/>
            <person name="Huang C.-H."/>
            <person name="Kieser T."/>
            <person name="Larke L."/>
            <person name="Murphy L.D."/>
            <person name="Oliver K."/>
            <person name="O'Neil S."/>
            <person name="Rabbinowitsch E."/>
            <person name="Rajandream M.A."/>
            <person name="Rutherford K.M."/>
            <person name="Rutter S."/>
            <person name="Seeger K."/>
            <person name="Saunders D."/>
            <person name="Sharp S."/>
            <person name="Squares R."/>
            <person name="Squares S."/>
            <person name="Taylor K."/>
            <person name="Warren T."/>
            <person name="Wietzorrek A."/>
            <person name="Woodward J.R."/>
            <person name="Barrell B.G."/>
            <person name="Parkhill J."/>
            <person name="Hopwood D.A."/>
        </authorList>
    </citation>
    <scope>NUCLEOTIDE SEQUENCE [LARGE SCALE GENOMIC DNA]</scope>
    <source>
        <strain>ATCC BAA-471 / A3(2) / M145</strain>
    </source>
</reference>
<reference key="2">
    <citation type="journal article" date="1994" name="Gene">
        <title>Characterization of two groEL genes in Streptomyces coelicolor A3(2).</title>
        <authorList>
            <person name="Duchene A.M."/>
            <person name="Kieser H.M."/>
            <person name="Hopwood D.A."/>
            <person name="Thompson C.J."/>
            <person name="Mazodier P."/>
        </authorList>
    </citation>
    <scope>NUCLEOTIDE SEQUENCE [GENOMIC DNA] OF 121-249</scope>
    <source>
        <strain>A3(2) / J1501</strain>
    </source>
</reference>
<keyword id="KW-1185">Reference proteome</keyword>
<keyword id="KW-0732">Signal</keyword>